<evidence type="ECO:0000250" key="1">
    <source>
        <dbReference type="UniProtKB" id="Q86UV5"/>
    </source>
</evidence>
<evidence type="ECO:0000255" key="2"/>
<evidence type="ECO:0000255" key="3">
    <source>
        <dbReference type="PROSITE-ProRule" id="PRU01035"/>
    </source>
</evidence>
<evidence type="ECO:0000256" key="4">
    <source>
        <dbReference type="SAM" id="MobiDB-lite"/>
    </source>
</evidence>
<evidence type="ECO:0000269" key="5">
    <source>
    </source>
</evidence>
<evidence type="ECO:0000305" key="6"/>
<evidence type="ECO:0000312" key="7">
    <source>
        <dbReference type="Proteomes" id="UP000001940"/>
    </source>
</evidence>
<evidence type="ECO:0000312" key="8">
    <source>
        <dbReference type="WormBase" id="F30A10.10a"/>
    </source>
</evidence>
<evidence type="ECO:0000312" key="9">
    <source>
        <dbReference type="WormBase" id="F30A10.10b"/>
    </source>
</evidence>
<protein>
    <recommendedName>
        <fullName evidence="6">Ubiquitin carboxyl-terminal hydrolase usp-48</fullName>
        <ecNumber evidence="1">3.4.19.12</ecNumber>
    </recommendedName>
    <alternativeName>
        <fullName evidence="8">Ubiquitin-specific protease 48</fullName>
    </alternativeName>
</protein>
<proteinExistence type="evidence at protein level"/>
<reference evidence="7" key="1">
    <citation type="journal article" date="1998" name="Science">
        <title>Genome sequence of the nematode C. elegans: a platform for investigating biology.</title>
        <authorList>
            <consortium name="The C. elegans sequencing consortium"/>
        </authorList>
    </citation>
    <scope>NUCLEOTIDE SEQUENCE [LARGE SCALE GENOMIC DNA]</scope>
    <source>
        <strain evidence="7">Bristol N2</strain>
    </source>
</reference>
<reference evidence="6" key="2">
    <citation type="journal article" date="2019" name="G3 (Bethesda)">
        <title>Restriction of cellular plasticity of differentiated cells mediated by chromatin modifiers, transcription factors and protein kinases.</title>
        <authorList>
            <person name="Rahe D."/>
            <person name="Hobert O."/>
        </authorList>
    </citation>
    <scope>FUNCTION</scope>
    <scope>SUBCELLULAR LOCATION</scope>
    <scope>TISSUE SPECIFICITY</scope>
    <scope>MUTAGENESIS OF ARG-101; 126-TRP--HIS-1264 AND 136-GLN--HIS-1264</scope>
</reference>
<comment type="function">
    <text evidence="1 5">Recognizes and hydrolyzes the peptide bond at the C-terminal Gly of ubiquitin (By similarity). Involved in the processing of poly-ubiquitin precursors as well as that of ubiquitinated proteins (By similarity). Required post-developmentally to restrict the plasticity of epidermal cells, probably by regulating gene expression (PubMed:31088904).</text>
</comment>
<comment type="catalytic activity">
    <reaction evidence="1">
        <text>Thiol-dependent hydrolysis of ester, thioester, amide, peptide and isopeptide bonds formed by the C-terminal Gly of ubiquitin (a 76-residue protein attached to proteins as an intracellular targeting signal).</text>
        <dbReference type="EC" id="3.4.19.12"/>
    </reaction>
</comment>
<comment type="subcellular location">
    <subcellularLocation>
        <location evidence="5">Nucleus</location>
    </subcellularLocation>
    <subcellularLocation>
        <location evidence="5">Chromosome</location>
    </subcellularLocation>
    <text evidence="5">In pachytene germline cells and oocytes, localizes to chromosomes.</text>
</comment>
<comment type="alternative products">
    <event type="alternative splicing"/>
    <isoform>
        <id>G5ECC7-1</id>
        <name evidence="8">a</name>
        <sequence type="displayed"/>
    </isoform>
    <isoform>
        <id>G5ECC7-2</id>
        <name evidence="9">b</name>
        <sequence type="described" ref="VSP_060727"/>
    </isoform>
</comment>
<comment type="tissue specificity">
    <text evidence="5">Broadly expressed. Expressed in germline.</text>
</comment>
<comment type="similarity">
    <text evidence="2">Belongs to the peptidase C19 family.</text>
</comment>
<sequence>MTKETDKKPKERPNQRKVAFRNEAINALVNTDEDQVTFSKAMEVAKLDCQKCLLHDMHSSKSSNCRDNPFCIHRLGLEKFEKLITQEQETKEEAKKDQKRRDLNDQPAGLINGGNFCYVNSFLQVWFNVPEFRQLIYDFRPSENFVPPEAPRMNVQATMLALQDIFYTLQTTPFNETDKTSNLGKLLRLNSEQQDSQEFGLKFFNALERCLPDHPNGKETLKRLKDLFTGETCTRIVCKCGQRSEREETAISLTLNIEGYCTLLDALDAYFGEEHLDDFKCSKCNKTGDVSKQSDYVKLPPVIVIQLNRYKYTSKGRQKLKTPMAYPREIPAKAFQRTNNSIPPPAEMYDLFAVTIHEGNNAECGHYYDLIKSPLNQKWYRYNDEAIEAIPKPPGTEKPTTAKTEKSRKKDKEKYPTDQKACYGLLYRRRDAFKPLPHPKLPPEELIIDSKTEIEELFEGLTKKKIEKSEKRLYDLERRINKVKISYGKLETHSDKYKEANEVVFLPTTLLQDVLAQEYEVAKGEKKKKKKEASENEEKKKNEEDEALSAAIAASEADQRDKASSEPSTSAAATEAGDDEELRAESETPNPENAESTQVAIMETDEIMDTTPTKDIDILAKAMEDNALPTVEVPQPELKKRTRQQNGEVKYVYSQRTPRKSHNGTNGTNSSPQKQPVSSRVAALLSSHEIPTCGHGKMSIDPILYGDVKAVSRAPAIALLREYDFRVKIVYDNGENVFPENEKERDVFIFTAEDICMECVREMREEGNFNNQLEDDEKLVRRILKEEKQRCSVKCPSERPDGYLYVAKFALSNFKKSAMSARENRLAQSHNKQGTLHFDSHPMFQQKSNSGYLTLSLKRTRGKPRKSLSEIPEKMQKLDEIGSKELPDEIIADEEEISENMGSDIPTKPVESINPDALVPFEKIEFNSELRCSHGGINFNQFRLSVSPEEWAHLKVYFDECYEVKCSDDVCDQCRQMEVDAQNGSENMRGLVREMRKRISDTLKTVESRAESKEDGADIKYGICSVFIDKLRKLTSRQSTSPPSICQECLLCPHQQPFKGFLNEDNHKDSHVVGLTEEEWNTFLTEIRKLEEAGDDQSIAVDPCPIPIENGQIVDMCEKCFEQHIKFTEEQKYMFENENIYVKLVNLNVEEDIAKANGKARRGRAKNLYAIKMSSTNKLMELKVQLYDKTHQLPNDQLLYRTAGGEQFDVSNNQKTLFDLRLSPNNNDNPLILIAQQFSPSASQADETGDRAPERGFVDTALAH</sequence>
<accession>G5ECC7</accession>
<accession>A0A5K1I7W2</accession>
<gene>
    <name evidence="8" type="primary">usp-48</name>
    <name evidence="8" type="ORF">F30A10.10</name>
</gene>
<dbReference type="EC" id="3.4.19.12" evidence="1"/>
<dbReference type="EMBL" id="BX284601">
    <property type="protein sequence ID" value="CAB03026.2"/>
    <property type="molecule type" value="Genomic_DNA"/>
</dbReference>
<dbReference type="EMBL" id="BX284601">
    <property type="protein sequence ID" value="VWL57635.1"/>
    <property type="molecule type" value="Genomic_DNA"/>
</dbReference>
<dbReference type="PIR" id="T19899">
    <property type="entry name" value="T19899"/>
</dbReference>
<dbReference type="RefSeq" id="NP_001361851.1">
    <molecule id="G5ECC7-1"/>
    <property type="nucleotide sequence ID" value="NM_001375101.2"/>
</dbReference>
<dbReference type="RefSeq" id="NP_001380262.1">
    <molecule id="G5ECC7-2"/>
    <property type="nucleotide sequence ID" value="NM_001392830.1"/>
</dbReference>
<dbReference type="RefSeq" id="NP_492524.2">
    <property type="nucleotide sequence ID" value="NM_060123.5"/>
</dbReference>
<dbReference type="SMR" id="G5ECC7"/>
<dbReference type="FunCoup" id="G5ECC7">
    <property type="interactions" value="566"/>
</dbReference>
<dbReference type="STRING" id="6239.F30A10.10.1"/>
<dbReference type="MEROPS" id="C19.A29"/>
<dbReference type="PaxDb" id="6239-F30A10.10"/>
<dbReference type="PeptideAtlas" id="G5ECC7"/>
<dbReference type="EnsemblMetazoa" id="F30A10.10a.1">
    <molecule id="G5ECC7-1"/>
    <property type="protein sequence ID" value="F30A10.10a.1"/>
    <property type="gene ID" value="WBGene00009267"/>
</dbReference>
<dbReference type="EnsemblMetazoa" id="F30A10.10b.1">
    <molecule id="G5ECC7-2"/>
    <property type="protein sequence ID" value="F30A10.10b.1"/>
    <property type="gene ID" value="WBGene00009267"/>
</dbReference>
<dbReference type="GeneID" id="172782"/>
<dbReference type="AGR" id="WB:WBGene00009267"/>
<dbReference type="WormBase" id="F30A10.10a">
    <molecule id="G5ECC7-1"/>
    <property type="protein sequence ID" value="CE53705"/>
    <property type="gene ID" value="WBGene00009267"/>
    <property type="gene designation" value="usp-48"/>
</dbReference>
<dbReference type="WormBase" id="F30A10.10b">
    <molecule id="G5ECC7-2"/>
    <property type="protein sequence ID" value="CE53715"/>
    <property type="gene ID" value="WBGene00009267"/>
    <property type="gene designation" value="usp-48"/>
</dbReference>
<dbReference type="eggNOG" id="KOG1863">
    <property type="taxonomic scope" value="Eukaryota"/>
</dbReference>
<dbReference type="GeneTree" id="ENSGT00940000167744"/>
<dbReference type="HOGENOM" id="CLU_263607_0_0_1"/>
<dbReference type="InParanoid" id="G5ECC7"/>
<dbReference type="OrthoDB" id="289038at2759"/>
<dbReference type="Reactome" id="R-CEL-1169408">
    <property type="pathway name" value="ISG15 antiviral mechanism"/>
</dbReference>
<dbReference type="PRO" id="PR:G5ECC7"/>
<dbReference type="Proteomes" id="UP000001940">
    <property type="component" value="Chromosome I"/>
</dbReference>
<dbReference type="Bgee" id="WBGene00009267">
    <property type="expression patterns" value="Expressed in adult organism and 4 other cell types or tissues"/>
</dbReference>
<dbReference type="ExpressionAtlas" id="G5ECC7">
    <property type="expression patterns" value="baseline and differential"/>
</dbReference>
<dbReference type="GO" id="GO:0005694">
    <property type="term" value="C:chromosome"/>
    <property type="evidence" value="ECO:0007669"/>
    <property type="project" value="UniProtKB-SubCell"/>
</dbReference>
<dbReference type="GO" id="GO:0005829">
    <property type="term" value="C:cytosol"/>
    <property type="evidence" value="ECO:0000318"/>
    <property type="project" value="GO_Central"/>
</dbReference>
<dbReference type="GO" id="GO:0005634">
    <property type="term" value="C:nucleus"/>
    <property type="evidence" value="ECO:0000318"/>
    <property type="project" value="GO_Central"/>
</dbReference>
<dbReference type="GO" id="GO:0004843">
    <property type="term" value="F:cysteine-type deubiquitinase activity"/>
    <property type="evidence" value="ECO:0000318"/>
    <property type="project" value="GO_Central"/>
</dbReference>
<dbReference type="GO" id="GO:0016579">
    <property type="term" value="P:protein deubiquitination"/>
    <property type="evidence" value="ECO:0007669"/>
    <property type="project" value="InterPro"/>
</dbReference>
<dbReference type="GO" id="GO:0006508">
    <property type="term" value="P:proteolysis"/>
    <property type="evidence" value="ECO:0007669"/>
    <property type="project" value="UniProtKB-KW"/>
</dbReference>
<dbReference type="GO" id="GO:0031647">
    <property type="term" value="P:regulation of protein stability"/>
    <property type="evidence" value="ECO:0000318"/>
    <property type="project" value="GO_Central"/>
</dbReference>
<dbReference type="Gene3D" id="3.90.70.10">
    <property type="entry name" value="Cysteine proteinases"/>
    <property type="match status" value="1"/>
</dbReference>
<dbReference type="InterPro" id="IPR038765">
    <property type="entry name" value="Papain-like_cys_pep_sf"/>
</dbReference>
<dbReference type="InterPro" id="IPR050164">
    <property type="entry name" value="Peptidase_C19"/>
</dbReference>
<dbReference type="InterPro" id="IPR001394">
    <property type="entry name" value="Peptidase_C19_UCH"/>
</dbReference>
<dbReference type="InterPro" id="IPR018200">
    <property type="entry name" value="USP_CS"/>
</dbReference>
<dbReference type="InterPro" id="IPR028889">
    <property type="entry name" value="USP_dom"/>
</dbReference>
<dbReference type="PANTHER" id="PTHR24006">
    <property type="entry name" value="UBIQUITIN CARBOXYL-TERMINAL HYDROLASE"/>
    <property type="match status" value="1"/>
</dbReference>
<dbReference type="PANTHER" id="PTHR24006:SF722">
    <property type="entry name" value="UBIQUITIN CARBOXYL-TERMINAL HYDROLASE 48"/>
    <property type="match status" value="1"/>
</dbReference>
<dbReference type="Pfam" id="PF00443">
    <property type="entry name" value="UCH"/>
    <property type="match status" value="1"/>
</dbReference>
<dbReference type="Pfam" id="PF24543">
    <property type="entry name" value="Usp-48"/>
    <property type="match status" value="1"/>
</dbReference>
<dbReference type="SUPFAM" id="SSF54001">
    <property type="entry name" value="Cysteine proteinases"/>
    <property type="match status" value="1"/>
</dbReference>
<dbReference type="PROSITE" id="PS00972">
    <property type="entry name" value="USP_1"/>
    <property type="match status" value="1"/>
</dbReference>
<dbReference type="PROSITE" id="PS00973">
    <property type="entry name" value="USP_2"/>
    <property type="match status" value="1"/>
</dbReference>
<dbReference type="PROSITE" id="PS50235">
    <property type="entry name" value="USP_3"/>
    <property type="match status" value="1"/>
</dbReference>
<keyword id="KW-0025">Alternative splicing</keyword>
<keyword id="KW-0158">Chromosome</keyword>
<keyword id="KW-0175">Coiled coil</keyword>
<keyword id="KW-0378">Hydrolase</keyword>
<keyword id="KW-0539">Nucleus</keyword>
<keyword id="KW-0645">Protease</keyword>
<keyword id="KW-1185">Reference proteome</keyword>
<keyword id="KW-0788">Thiol protease</keyword>
<keyword id="KW-0833">Ubl conjugation pathway</keyword>
<organism evidence="7">
    <name type="scientific">Caenorhabditis elegans</name>
    <dbReference type="NCBI Taxonomy" id="6239"/>
    <lineage>
        <taxon>Eukaryota</taxon>
        <taxon>Metazoa</taxon>
        <taxon>Ecdysozoa</taxon>
        <taxon>Nematoda</taxon>
        <taxon>Chromadorea</taxon>
        <taxon>Rhabditida</taxon>
        <taxon>Rhabditina</taxon>
        <taxon>Rhabditomorpha</taxon>
        <taxon>Rhabditoidea</taxon>
        <taxon>Rhabditidae</taxon>
        <taxon>Peloderinae</taxon>
        <taxon>Caenorhabditis</taxon>
    </lineage>
</organism>
<feature type="chain" id="PRO_0000448599" description="Ubiquitin carboxyl-terminal hydrolase usp-48">
    <location>
        <begin position="1"/>
        <end position="1264"/>
    </location>
</feature>
<feature type="domain" description="USP" evidence="3">
    <location>
        <begin position="108"/>
        <end position="430"/>
    </location>
</feature>
<feature type="region of interest" description="Disordered" evidence="4">
    <location>
        <begin position="390"/>
        <end position="415"/>
    </location>
</feature>
<feature type="region of interest" description="Disordered" evidence="4">
    <location>
        <begin position="522"/>
        <end position="610"/>
    </location>
</feature>
<feature type="region of interest" description="Disordered" evidence="4">
    <location>
        <begin position="630"/>
        <end position="679"/>
    </location>
</feature>
<feature type="coiled-coil region" evidence="2">
    <location>
        <begin position="516"/>
        <end position="547"/>
    </location>
</feature>
<feature type="compositionally biased region" description="Basic and acidic residues" evidence="4">
    <location>
        <begin position="403"/>
        <end position="415"/>
    </location>
</feature>
<feature type="compositionally biased region" description="Basic and acidic residues" evidence="4">
    <location>
        <begin position="532"/>
        <end position="543"/>
    </location>
</feature>
<feature type="compositionally biased region" description="Low complexity" evidence="4">
    <location>
        <begin position="565"/>
        <end position="575"/>
    </location>
</feature>
<feature type="compositionally biased region" description="Polar residues" evidence="4">
    <location>
        <begin position="587"/>
        <end position="599"/>
    </location>
</feature>
<feature type="compositionally biased region" description="Polar residues" evidence="4">
    <location>
        <begin position="663"/>
        <end position="678"/>
    </location>
</feature>
<feature type="active site" description="Nucleophile" evidence="3">
    <location>
        <position position="117"/>
    </location>
</feature>
<feature type="active site" description="Proton acceptor" evidence="3">
    <location>
        <position position="366"/>
    </location>
</feature>
<feature type="splice variant" id="VSP_060727" description="In isoform b." evidence="6">
    <location>
        <begin position="844"/>
        <end position="845"/>
    </location>
</feature>
<feature type="mutagenesis site" description="In ot872; temperature-sensitive mutant. At the restrictive temperature of 25 degrees Celsius, promotes the acquisition of ASE neuron identity markers in epidermal cells induced by ectopic expression of transcription factor che-1 in L4 larvae." evidence="5">
    <original>R</original>
    <variation>K</variation>
    <location>
        <position position="101"/>
    </location>
</feature>
<feature type="mutagenesis site" description="In mg457; promotes the acquisition of ASE neuron identity markers in epidermal cells induced by ectopic expression of transcription factor che-1 in adults." evidence="5">
    <location>
        <begin position="126"/>
        <end position="1264"/>
    </location>
</feature>
<feature type="mutagenesis site" description="In ot674; promotes the acquisition of ASE neuron identity markers in epidermal cells induced by ectopic expression of transcription factor che-1 in adults." evidence="5">
    <location>
        <begin position="163"/>
        <end position="1264"/>
    </location>
</feature>
<name>UBP48_CAEEL</name>